<comment type="subcellular location">
    <subcellularLocation>
        <location>Mitochondrion</location>
    </subcellularLocation>
    <subcellularLocation>
        <location evidence="1">Membrane</location>
        <topology evidence="1">Single-pass membrane protein</topology>
    </subcellularLocation>
</comment>
<comment type="similarity">
    <text evidence="5">Belongs to the LCL3 family.</text>
</comment>
<accession>C5P0Z4</accession>
<sequence>MKWLFWASPPQDDSNSNSGAASQVKCRNNENVDVPAPSNAAPPSDRTISKVQSSSRDWNSIVNATDWKQFTEPRTIIPTALVTGGILLCVHIHRKYLRRIPEAGHISPSFFRRRSLLGKVTSVGDGDNFRMYHTPGGKLGGWEWWRKVPTGKNELKNRTIHVRLAGVDAPELPHFGRPAQPFSQEAHSWLTNYILGRRVRAHLYRPDQYGRVVATVYVRRWLFFRQDVGLQMLKHGLATVYEAKTGVEFGGVELERQYREAEACAKKKGKGMWKALKGGTKGEWESPREYKTRMAAEEGQKKNARGITRKK</sequence>
<keyword id="KW-0106">Calcium</keyword>
<keyword id="KW-0255">Endonuclease</keyword>
<keyword id="KW-0378">Hydrolase</keyword>
<keyword id="KW-0472">Membrane</keyword>
<keyword id="KW-0479">Metal-binding</keyword>
<keyword id="KW-0496">Mitochondrion</keyword>
<keyword id="KW-0540">Nuclease</keyword>
<keyword id="KW-0812">Transmembrane</keyword>
<keyword id="KW-1133">Transmembrane helix</keyword>
<evidence type="ECO:0000250" key="1"/>
<evidence type="ECO:0000255" key="2"/>
<evidence type="ECO:0000255" key="3">
    <source>
        <dbReference type="PROSITE-ProRule" id="PRU00272"/>
    </source>
</evidence>
<evidence type="ECO:0000256" key="4">
    <source>
        <dbReference type="SAM" id="MobiDB-lite"/>
    </source>
</evidence>
<evidence type="ECO:0000305" key="5"/>
<name>LCL3_COCP7</name>
<gene>
    <name type="primary">LCL3</name>
    <name type="ORF">CPC735_070340</name>
</gene>
<organism>
    <name type="scientific">Coccidioides posadasii (strain C735)</name>
    <name type="common">Valley fever fungus</name>
    <dbReference type="NCBI Taxonomy" id="222929"/>
    <lineage>
        <taxon>Eukaryota</taxon>
        <taxon>Fungi</taxon>
        <taxon>Dikarya</taxon>
        <taxon>Ascomycota</taxon>
        <taxon>Pezizomycotina</taxon>
        <taxon>Eurotiomycetes</taxon>
        <taxon>Eurotiomycetidae</taxon>
        <taxon>Onygenales</taxon>
        <taxon>Onygenaceae</taxon>
        <taxon>Coccidioides</taxon>
    </lineage>
</organism>
<protein>
    <recommendedName>
        <fullName>Probable endonuclease LCL3</fullName>
        <ecNumber>3.1.-.-</ecNumber>
    </recommendedName>
</protein>
<proteinExistence type="inferred from homology"/>
<feature type="chain" id="PRO_0000408656" description="Probable endonuclease LCL3">
    <location>
        <begin position="1"/>
        <end position="311"/>
    </location>
</feature>
<feature type="transmembrane region" description="Helical" evidence="2">
    <location>
        <begin position="76"/>
        <end position="92"/>
    </location>
</feature>
<feature type="domain" description="TNase-like" evidence="3">
    <location>
        <begin position="114"/>
        <end position="275"/>
    </location>
</feature>
<feature type="region of interest" description="Disordered" evidence="4">
    <location>
        <begin position="1"/>
        <end position="53"/>
    </location>
</feature>
<feature type="compositionally biased region" description="Polar residues" evidence="4">
    <location>
        <begin position="11"/>
        <end position="31"/>
    </location>
</feature>
<feature type="active site" evidence="3">
    <location>
        <position position="163"/>
    </location>
</feature>
<feature type="active site" evidence="3">
    <location>
        <position position="171"/>
    </location>
</feature>
<feature type="active site" evidence="3">
    <location>
        <position position="211"/>
    </location>
</feature>
<feature type="binding site" evidence="3">
    <location>
        <position position="168"/>
    </location>
    <ligand>
        <name>Ca(2+)</name>
        <dbReference type="ChEBI" id="CHEBI:29108"/>
    </ligand>
</feature>
<reference key="1">
    <citation type="journal article" date="2009" name="Genome Res.">
        <title>Comparative genomic analyses of the human fungal pathogens Coccidioides and their relatives.</title>
        <authorList>
            <person name="Sharpton T.J."/>
            <person name="Stajich J.E."/>
            <person name="Rounsley S.D."/>
            <person name="Gardner M.J."/>
            <person name="Wortman J.R."/>
            <person name="Jordar V.S."/>
            <person name="Maiti R."/>
            <person name="Kodira C.D."/>
            <person name="Neafsey D.E."/>
            <person name="Zeng Q."/>
            <person name="Hung C.-Y."/>
            <person name="McMahan C."/>
            <person name="Muszewska A."/>
            <person name="Grynberg M."/>
            <person name="Mandel M.A."/>
            <person name="Kellner E.M."/>
            <person name="Barker B.M."/>
            <person name="Galgiani J.N."/>
            <person name="Orbach M.J."/>
            <person name="Kirkland T.N."/>
            <person name="Cole G.T."/>
            <person name="Henn M.R."/>
            <person name="Birren B.W."/>
            <person name="Taylor J.W."/>
        </authorList>
    </citation>
    <scope>NUCLEOTIDE SEQUENCE [LARGE SCALE GENOMIC DNA]</scope>
    <source>
        <strain>C735</strain>
    </source>
</reference>
<dbReference type="EC" id="3.1.-.-"/>
<dbReference type="EMBL" id="ACFW01000009">
    <property type="protein sequence ID" value="EER29352.1"/>
    <property type="molecule type" value="Genomic_DNA"/>
</dbReference>
<dbReference type="RefSeq" id="XP_003071497.1">
    <property type="nucleotide sequence ID" value="XM_003071451.1"/>
</dbReference>
<dbReference type="SMR" id="C5P0Z4"/>
<dbReference type="GeneID" id="9696991"/>
<dbReference type="KEGG" id="cpw:9696991"/>
<dbReference type="VEuPathDB" id="FungiDB:CPC735_070340"/>
<dbReference type="HOGENOM" id="CLU_046484_0_1_1"/>
<dbReference type="OrthoDB" id="430293at2759"/>
<dbReference type="Proteomes" id="UP000009084">
    <property type="component" value="Unassembled WGS sequence"/>
</dbReference>
<dbReference type="GO" id="GO:0016020">
    <property type="term" value="C:membrane"/>
    <property type="evidence" value="ECO:0007669"/>
    <property type="project" value="UniProtKB-SubCell"/>
</dbReference>
<dbReference type="GO" id="GO:0005739">
    <property type="term" value="C:mitochondrion"/>
    <property type="evidence" value="ECO:0007669"/>
    <property type="project" value="UniProtKB-SubCell"/>
</dbReference>
<dbReference type="GO" id="GO:0004519">
    <property type="term" value="F:endonuclease activity"/>
    <property type="evidence" value="ECO:0007669"/>
    <property type="project" value="UniProtKB-KW"/>
</dbReference>
<dbReference type="GO" id="GO:0046872">
    <property type="term" value="F:metal ion binding"/>
    <property type="evidence" value="ECO:0007669"/>
    <property type="project" value="UniProtKB-KW"/>
</dbReference>
<dbReference type="FunFam" id="2.40.50.90:FF:000029">
    <property type="entry name" value="Probable endonuclease lcl3"/>
    <property type="match status" value="1"/>
</dbReference>
<dbReference type="Gene3D" id="2.40.50.90">
    <property type="match status" value="1"/>
</dbReference>
<dbReference type="InterPro" id="IPR035437">
    <property type="entry name" value="SNase_OB-fold_sf"/>
</dbReference>
<dbReference type="InterPro" id="IPR016071">
    <property type="entry name" value="Staphylococal_nuclease_OB-fold"/>
</dbReference>
<dbReference type="PANTHER" id="PTHR12302">
    <property type="entry name" value="EBNA2 BINDING PROTEIN P100"/>
    <property type="match status" value="1"/>
</dbReference>
<dbReference type="PANTHER" id="PTHR12302:SF3">
    <property type="entry name" value="SERINE_THREONINE-PROTEIN KINASE 31"/>
    <property type="match status" value="1"/>
</dbReference>
<dbReference type="Pfam" id="PF00565">
    <property type="entry name" value="SNase"/>
    <property type="match status" value="1"/>
</dbReference>
<dbReference type="SMART" id="SM00318">
    <property type="entry name" value="SNc"/>
    <property type="match status" value="1"/>
</dbReference>
<dbReference type="SUPFAM" id="SSF50199">
    <property type="entry name" value="Staphylococcal nuclease"/>
    <property type="match status" value="1"/>
</dbReference>
<dbReference type="PROSITE" id="PS50830">
    <property type="entry name" value="TNASE_3"/>
    <property type="match status" value="1"/>
</dbReference>